<sequence>MPRSLKKGPFIDISLLKKVEKSVKINDKKPIKTWSRRSTIFPNMVGLTISIHNGRSHIPVFVTEEMVGHKLGEFSLTRTYRGHTADKKVKKR</sequence>
<proteinExistence type="inferred from homology"/>
<reference key="1">
    <citation type="journal article" date="2009" name="Science">
        <title>The dynamics and time scale of ongoing genomic erosion in symbiotic bacteria.</title>
        <authorList>
            <person name="Moran N.A."/>
            <person name="McLaughlin H.J."/>
            <person name="Sorek R."/>
        </authorList>
    </citation>
    <scope>NUCLEOTIDE SEQUENCE [LARGE SCALE GENOMIC DNA]</scope>
    <source>
        <strain>Tuc7</strain>
    </source>
</reference>
<name>RS19_BUCAT</name>
<protein>
    <recommendedName>
        <fullName evidence="1">Small ribosomal subunit protein uS19</fullName>
    </recommendedName>
    <alternativeName>
        <fullName evidence="2">30S ribosomal protein S19</fullName>
    </alternativeName>
</protein>
<feature type="chain" id="PRO_1000146375" description="Small ribosomal subunit protein uS19">
    <location>
        <begin position="1"/>
        <end position="92"/>
    </location>
</feature>
<comment type="function">
    <text evidence="1">Protein S19 forms a complex with S13 that binds strongly to the 16S ribosomal RNA.</text>
</comment>
<comment type="similarity">
    <text evidence="1">Belongs to the universal ribosomal protein uS19 family.</text>
</comment>
<organism>
    <name type="scientific">Buchnera aphidicola subsp. Acyrthosiphon pisum (strain Tuc7)</name>
    <dbReference type="NCBI Taxonomy" id="561501"/>
    <lineage>
        <taxon>Bacteria</taxon>
        <taxon>Pseudomonadati</taxon>
        <taxon>Pseudomonadota</taxon>
        <taxon>Gammaproteobacteria</taxon>
        <taxon>Enterobacterales</taxon>
        <taxon>Erwiniaceae</taxon>
        <taxon>Buchnera</taxon>
    </lineage>
</organism>
<keyword id="KW-0687">Ribonucleoprotein</keyword>
<keyword id="KW-0689">Ribosomal protein</keyword>
<keyword id="KW-0694">RNA-binding</keyword>
<keyword id="KW-0699">rRNA-binding</keyword>
<gene>
    <name evidence="1" type="primary">rpsS</name>
    <name type="ordered locus">BUAPTUC7_514</name>
</gene>
<dbReference type="EMBL" id="CP001158">
    <property type="protein sequence ID" value="ACL30310.1"/>
    <property type="molecule type" value="Genomic_DNA"/>
</dbReference>
<dbReference type="RefSeq" id="WP_009874471.1">
    <property type="nucleotide sequence ID" value="NC_011834.1"/>
</dbReference>
<dbReference type="SMR" id="B8D845"/>
<dbReference type="KEGG" id="bau:BUAPTUC7_514"/>
<dbReference type="HOGENOM" id="CLU_144911_0_1_6"/>
<dbReference type="GO" id="GO:0005737">
    <property type="term" value="C:cytoplasm"/>
    <property type="evidence" value="ECO:0007669"/>
    <property type="project" value="UniProtKB-ARBA"/>
</dbReference>
<dbReference type="GO" id="GO:0015935">
    <property type="term" value="C:small ribosomal subunit"/>
    <property type="evidence" value="ECO:0007669"/>
    <property type="project" value="InterPro"/>
</dbReference>
<dbReference type="GO" id="GO:0019843">
    <property type="term" value="F:rRNA binding"/>
    <property type="evidence" value="ECO:0007669"/>
    <property type="project" value="UniProtKB-UniRule"/>
</dbReference>
<dbReference type="GO" id="GO:0003735">
    <property type="term" value="F:structural constituent of ribosome"/>
    <property type="evidence" value="ECO:0007669"/>
    <property type="project" value="InterPro"/>
</dbReference>
<dbReference type="GO" id="GO:0000028">
    <property type="term" value="P:ribosomal small subunit assembly"/>
    <property type="evidence" value="ECO:0007669"/>
    <property type="project" value="TreeGrafter"/>
</dbReference>
<dbReference type="GO" id="GO:0006412">
    <property type="term" value="P:translation"/>
    <property type="evidence" value="ECO:0007669"/>
    <property type="project" value="UniProtKB-UniRule"/>
</dbReference>
<dbReference type="FunFam" id="3.30.860.10:FF:000001">
    <property type="entry name" value="30S ribosomal protein S19"/>
    <property type="match status" value="1"/>
</dbReference>
<dbReference type="Gene3D" id="3.30.860.10">
    <property type="entry name" value="30s Ribosomal Protein S19, Chain A"/>
    <property type="match status" value="1"/>
</dbReference>
<dbReference type="HAMAP" id="MF_00531">
    <property type="entry name" value="Ribosomal_uS19"/>
    <property type="match status" value="1"/>
</dbReference>
<dbReference type="InterPro" id="IPR002222">
    <property type="entry name" value="Ribosomal_uS19"/>
</dbReference>
<dbReference type="InterPro" id="IPR005732">
    <property type="entry name" value="Ribosomal_uS19_bac-type"/>
</dbReference>
<dbReference type="InterPro" id="IPR020934">
    <property type="entry name" value="Ribosomal_uS19_CS"/>
</dbReference>
<dbReference type="InterPro" id="IPR023575">
    <property type="entry name" value="Ribosomal_uS19_SF"/>
</dbReference>
<dbReference type="NCBIfam" id="TIGR01050">
    <property type="entry name" value="rpsS_bact"/>
    <property type="match status" value="1"/>
</dbReference>
<dbReference type="PANTHER" id="PTHR11880">
    <property type="entry name" value="RIBOSOMAL PROTEIN S19P FAMILY MEMBER"/>
    <property type="match status" value="1"/>
</dbReference>
<dbReference type="PANTHER" id="PTHR11880:SF8">
    <property type="entry name" value="SMALL RIBOSOMAL SUBUNIT PROTEIN US19M"/>
    <property type="match status" value="1"/>
</dbReference>
<dbReference type="Pfam" id="PF00203">
    <property type="entry name" value="Ribosomal_S19"/>
    <property type="match status" value="1"/>
</dbReference>
<dbReference type="PIRSF" id="PIRSF002144">
    <property type="entry name" value="Ribosomal_S19"/>
    <property type="match status" value="1"/>
</dbReference>
<dbReference type="PRINTS" id="PR00975">
    <property type="entry name" value="RIBOSOMALS19"/>
</dbReference>
<dbReference type="SUPFAM" id="SSF54570">
    <property type="entry name" value="Ribosomal protein S19"/>
    <property type="match status" value="1"/>
</dbReference>
<dbReference type="PROSITE" id="PS00323">
    <property type="entry name" value="RIBOSOMAL_S19"/>
    <property type="match status" value="1"/>
</dbReference>
<accession>B8D845</accession>
<evidence type="ECO:0000255" key="1">
    <source>
        <dbReference type="HAMAP-Rule" id="MF_00531"/>
    </source>
</evidence>
<evidence type="ECO:0000305" key="2"/>